<accession>Q7UAH4</accession>
<reference key="1">
    <citation type="journal article" date="2002" name="Nucleic Acids Res.">
        <title>Genome sequence of Shigella flexneri 2a: insights into pathogenicity through comparison with genomes of Escherichia coli K12 and O157.</title>
        <authorList>
            <person name="Jin Q."/>
            <person name="Yuan Z."/>
            <person name="Xu J."/>
            <person name="Wang Y."/>
            <person name="Shen Y."/>
            <person name="Lu W."/>
            <person name="Wang J."/>
            <person name="Liu H."/>
            <person name="Yang J."/>
            <person name="Yang F."/>
            <person name="Zhang X."/>
            <person name="Zhang J."/>
            <person name="Yang G."/>
            <person name="Wu H."/>
            <person name="Qu D."/>
            <person name="Dong J."/>
            <person name="Sun L."/>
            <person name="Xue Y."/>
            <person name="Zhao A."/>
            <person name="Gao Y."/>
            <person name="Zhu J."/>
            <person name="Kan B."/>
            <person name="Ding K."/>
            <person name="Chen S."/>
            <person name="Cheng H."/>
            <person name="Yao Z."/>
            <person name="He B."/>
            <person name="Chen R."/>
            <person name="Ma D."/>
            <person name="Qiang B."/>
            <person name="Wen Y."/>
            <person name="Hou Y."/>
            <person name="Yu J."/>
        </authorList>
    </citation>
    <scope>NUCLEOTIDE SEQUENCE [LARGE SCALE GENOMIC DNA]</scope>
    <source>
        <strain>301 / Serotype 2a</strain>
    </source>
</reference>
<reference key="2">
    <citation type="journal article" date="2003" name="Infect. Immun.">
        <title>Complete genome sequence and comparative genomics of Shigella flexneri serotype 2a strain 2457T.</title>
        <authorList>
            <person name="Wei J."/>
            <person name="Goldberg M.B."/>
            <person name="Burland V."/>
            <person name="Venkatesan M.M."/>
            <person name="Deng W."/>
            <person name="Fournier G."/>
            <person name="Mayhew G.F."/>
            <person name="Plunkett G. III"/>
            <person name="Rose D.J."/>
            <person name="Darling A."/>
            <person name="Mau B."/>
            <person name="Perna N.T."/>
            <person name="Payne S.M."/>
            <person name="Runyen-Janecky L.J."/>
            <person name="Zhou S."/>
            <person name="Schwartz D.C."/>
            <person name="Blattner F.R."/>
        </authorList>
    </citation>
    <scope>NUCLEOTIDE SEQUENCE [LARGE SCALE GENOMIC DNA]</scope>
    <source>
        <strain>ATCC 700930 / 2457T / Serotype 2a</strain>
    </source>
</reference>
<organism>
    <name type="scientific">Shigella flexneri</name>
    <dbReference type="NCBI Taxonomy" id="623"/>
    <lineage>
        <taxon>Bacteria</taxon>
        <taxon>Pseudomonadati</taxon>
        <taxon>Pseudomonadota</taxon>
        <taxon>Gammaproteobacteria</taxon>
        <taxon>Enterobacterales</taxon>
        <taxon>Enterobacteriaceae</taxon>
        <taxon>Shigella</taxon>
    </lineage>
</organism>
<protein>
    <recommendedName>
        <fullName>Cysteine desulfurase</fullName>
        <ecNumber>2.8.1.7</ecNumber>
    </recommendedName>
    <alternativeName>
        <fullName>Selenocysteine beta-lyase</fullName>
        <shortName>SCL</shortName>
    </alternativeName>
    <alternativeName>
        <fullName>Selenocysteine lyase</fullName>
        <ecNumber>4.4.1.16</ecNumber>
    </alternativeName>
    <alternativeName>
        <fullName>Selenocysteine reductase</fullName>
    </alternativeName>
</protein>
<feature type="chain" id="PRO_0000150337" description="Cysteine desulfurase">
    <location>
        <begin position="1"/>
        <end position="406"/>
    </location>
</feature>
<feature type="active site" description="Cysteine persulfide intermediate" evidence="1">
    <location>
        <position position="364"/>
    </location>
</feature>
<feature type="modified residue" description="N6-(pyridoxal phosphate)lysine" evidence="1">
    <location>
        <position position="226"/>
    </location>
</feature>
<comment type="function">
    <text evidence="1">Cysteine desulfurases mobilize the sulfur from L-cysteine to yield L-alanine, an essential step in sulfur metabolism for biosynthesis of a variety of sulfur-containing biomolecules. Component of the suf operon, which is activated and required under specific conditions such as oxidative stress and iron limitation. Acts as a potent selenocysteine lyase in vitro, that mobilizes selenium from L-selenocysteine. Selenocysteine lyase activity is however unsure in vivo (By similarity).</text>
</comment>
<comment type="catalytic activity">
    <reaction>
        <text>(sulfur carrier)-H + L-cysteine = (sulfur carrier)-SH + L-alanine</text>
        <dbReference type="Rhea" id="RHEA:43892"/>
        <dbReference type="Rhea" id="RHEA-COMP:14737"/>
        <dbReference type="Rhea" id="RHEA-COMP:14739"/>
        <dbReference type="ChEBI" id="CHEBI:29917"/>
        <dbReference type="ChEBI" id="CHEBI:35235"/>
        <dbReference type="ChEBI" id="CHEBI:57972"/>
        <dbReference type="ChEBI" id="CHEBI:64428"/>
        <dbReference type="EC" id="2.8.1.7"/>
    </reaction>
</comment>
<comment type="catalytic activity">
    <reaction>
        <text>L-selenocysteine + AH2 = hydrogenselenide + L-alanine + A + H(+)</text>
        <dbReference type="Rhea" id="RHEA:11632"/>
        <dbReference type="ChEBI" id="CHEBI:13193"/>
        <dbReference type="ChEBI" id="CHEBI:15378"/>
        <dbReference type="ChEBI" id="CHEBI:17499"/>
        <dbReference type="ChEBI" id="CHEBI:29317"/>
        <dbReference type="ChEBI" id="CHEBI:57843"/>
        <dbReference type="ChEBI" id="CHEBI:57972"/>
        <dbReference type="EC" id="4.4.1.16"/>
    </reaction>
</comment>
<comment type="cofactor">
    <cofactor evidence="1">
        <name>pyridoxal 5'-phosphate</name>
        <dbReference type="ChEBI" id="CHEBI:597326"/>
    </cofactor>
</comment>
<comment type="pathway">
    <text>Cofactor biosynthesis; iron-sulfur cluster biosynthesis.</text>
</comment>
<comment type="subunit">
    <text evidence="1">Homodimer. Interacts with SufE and the SufBCD complex composed of SufB, SufC and SufD. The interaction with SufE is required to mediate the direct transfer of the sulfur atom from the S-sulfanylcysteine (By similarity).</text>
</comment>
<comment type="subcellular location">
    <subcellularLocation>
        <location evidence="1">Cytoplasm</location>
    </subcellularLocation>
</comment>
<comment type="similarity">
    <text evidence="2">Belongs to the class-V pyridoxal-phosphate-dependent aminotransferase family. Csd subfamily.</text>
</comment>
<comment type="sequence caution" evidence="2">
    <conflict type="miscellaneous discrepancy">
        <sequence resource="EMBL" id="AE005674"/>
    </conflict>
    <text>Contaminating sequence. An insertion starting from position 136 disrupts the coding region. The existence of SufS in this strain is therefore unsure.</text>
</comment>
<gene>
    <name type="primary">sufS</name>
    <name type="ordered locus">SF1709.1</name>
    <name type="ordered locus">S1842</name>
</gene>
<evidence type="ECO:0000250" key="1"/>
<evidence type="ECO:0000305" key="2"/>
<dbReference type="EC" id="2.8.1.7"/>
<dbReference type="EC" id="4.4.1.16"/>
<dbReference type="EMBL" id="AE005674">
    <property type="status" value="NOT_ANNOTATED_CDS"/>
    <property type="molecule type" value="Genomic_DNA"/>
</dbReference>
<dbReference type="EMBL" id="AE014073">
    <property type="protein sequence ID" value="AAP17174.1"/>
    <property type="molecule type" value="Genomic_DNA"/>
</dbReference>
<dbReference type="RefSeq" id="WP_000144580.1">
    <property type="nucleotide sequence ID" value="NZ_WPGW01000073.1"/>
</dbReference>
<dbReference type="SMR" id="Q7UAH4"/>
<dbReference type="KEGG" id="sfx:S1842"/>
<dbReference type="PATRIC" id="fig|623.156.peg.194"/>
<dbReference type="HOGENOM" id="CLU_003433_2_5_6"/>
<dbReference type="UniPathway" id="UPA00266"/>
<dbReference type="Proteomes" id="UP000001006">
    <property type="component" value="Chromosome"/>
</dbReference>
<dbReference type="Proteomes" id="UP000002673">
    <property type="component" value="Chromosome"/>
</dbReference>
<dbReference type="GO" id="GO:0005737">
    <property type="term" value="C:cytoplasm"/>
    <property type="evidence" value="ECO:0007669"/>
    <property type="project" value="UniProtKB-SubCell"/>
</dbReference>
<dbReference type="GO" id="GO:0031071">
    <property type="term" value="F:cysteine desulfurase activity"/>
    <property type="evidence" value="ECO:0007669"/>
    <property type="project" value="UniProtKB-UniRule"/>
</dbReference>
<dbReference type="GO" id="GO:0030170">
    <property type="term" value="F:pyridoxal phosphate binding"/>
    <property type="evidence" value="ECO:0007669"/>
    <property type="project" value="InterPro"/>
</dbReference>
<dbReference type="GO" id="GO:0009000">
    <property type="term" value="F:selenocysteine lyase activity"/>
    <property type="evidence" value="ECO:0007669"/>
    <property type="project" value="UniProtKB-UniRule"/>
</dbReference>
<dbReference type="GO" id="GO:0006534">
    <property type="term" value="P:cysteine metabolic process"/>
    <property type="evidence" value="ECO:0007669"/>
    <property type="project" value="InterPro"/>
</dbReference>
<dbReference type="CDD" id="cd06453">
    <property type="entry name" value="SufS_like"/>
    <property type="match status" value="1"/>
</dbReference>
<dbReference type="FunFam" id="3.40.640.10:FF:000042">
    <property type="entry name" value="Cysteine desulfurase"/>
    <property type="match status" value="1"/>
</dbReference>
<dbReference type="Gene3D" id="3.90.1150.10">
    <property type="entry name" value="Aspartate Aminotransferase, domain 1"/>
    <property type="match status" value="1"/>
</dbReference>
<dbReference type="Gene3D" id="3.40.640.10">
    <property type="entry name" value="Type I PLP-dependent aspartate aminotransferase-like (Major domain)"/>
    <property type="match status" value="1"/>
</dbReference>
<dbReference type="HAMAP" id="MF_01831">
    <property type="entry name" value="SufS_aminotrans_5"/>
    <property type="match status" value="1"/>
</dbReference>
<dbReference type="InterPro" id="IPR000192">
    <property type="entry name" value="Aminotrans_V_dom"/>
</dbReference>
<dbReference type="InterPro" id="IPR020578">
    <property type="entry name" value="Aminotrans_V_PyrdxlP_BS"/>
</dbReference>
<dbReference type="InterPro" id="IPR010970">
    <property type="entry name" value="Cys_dSase_SufS"/>
</dbReference>
<dbReference type="InterPro" id="IPR015424">
    <property type="entry name" value="PyrdxlP-dep_Trfase"/>
</dbReference>
<dbReference type="InterPro" id="IPR015421">
    <property type="entry name" value="PyrdxlP-dep_Trfase_major"/>
</dbReference>
<dbReference type="InterPro" id="IPR015422">
    <property type="entry name" value="PyrdxlP-dep_Trfase_small"/>
</dbReference>
<dbReference type="NCBIfam" id="NF006791">
    <property type="entry name" value="PRK09295.1"/>
    <property type="match status" value="1"/>
</dbReference>
<dbReference type="NCBIfam" id="TIGR01979">
    <property type="entry name" value="sufS"/>
    <property type="match status" value="1"/>
</dbReference>
<dbReference type="PANTHER" id="PTHR43586">
    <property type="entry name" value="CYSTEINE DESULFURASE"/>
    <property type="match status" value="1"/>
</dbReference>
<dbReference type="PANTHER" id="PTHR43586:SF25">
    <property type="entry name" value="CYSTEINE DESULFURASE"/>
    <property type="match status" value="1"/>
</dbReference>
<dbReference type="Pfam" id="PF00266">
    <property type="entry name" value="Aminotran_5"/>
    <property type="match status" value="1"/>
</dbReference>
<dbReference type="SUPFAM" id="SSF53383">
    <property type="entry name" value="PLP-dependent transferases"/>
    <property type="match status" value="1"/>
</dbReference>
<dbReference type="PROSITE" id="PS00595">
    <property type="entry name" value="AA_TRANSFER_CLASS_5"/>
    <property type="match status" value="1"/>
</dbReference>
<sequence>MTFSVDKVRADFPVLSREVNGLPLAYLDSAASAQKPSQVIDAEAEFYRHGYAAVHRGIHTLSAQATEKMENVRKRASLFINARSAEELVFVRGTTEGINLVANSWGNSNVRAGDNIIISQMEHHANIVPWQMLCARVGAELRVIPLNPDGTLQLETLPTLFDEKTRLLAITHVSNVLGTENPLAEMITLAHQHGAKVLVDGAQAVMHHPVDVQALDCDFYVFSGHKLYGPTGIGILYVKEALLQEMPPWEGGGSMIATVSLSEGTTWTKAPWRFEAGTPNTGGIIGLGAALEYVSALGLNSIAEYEQNLMHYALSQLESVPDLTLYGQQNRLGVIAFNLGKHHAYDVGSFLDNYGIAVRTGHHCAMPLMAYYNVPAMCRASLAMYNTHEEVERLVTGLQRIHRLLG</sequence>
<proteinExistence type="inferred from homology"/>
<name>SUFS_SHIFL</name>
<keyword id="KW-0963">Cytoplasm</keyword>
<keyword id="KW-0456">Lyase</keyword>
<keyword id="KW-0663">Pyridoxal phosphate</keyword>
<keyword id="KW-1185">Reference proteome</keyword>
<keyword id="KW-0808">Transferase</keyword>